<organism>
    <name type="scientific">Aspergillus niger (strain ATCC MYA-4892 / CBS 513.88 / FGSC A1513)</name>
    <dbReference type="NCBI Taxonomy" id="425011"/>
    <lineage>
        <taxon>Eukaryota</taxon>
        <taxon>Fungi</taxon>
        <taxon>Dikarya</taxon>
        <taxon>Ascomycota</taxon>
        <taxon>Pezizomycotina</taxon>
        <taxon>Eurotiomycetes</taxon>
        <taxon>Eurotiomycetidae</taxon>
        <taxon>Eurotiales</taxon>
        <taxon>Aspergillaceae</taxon>
        <taxon>Aspergillus</taxon>
        <taxon>Aspergillus subgen. Circumdati</taxon>
    </lineage>
</organism>
<gene>
    <name type="primary">mic60</name>
    <name type="ORF">An04g02460</name>
</gene>
<comment type="function">
    <text evidence="1">Component of the MICOS complex, a large protein complex of the mitochondrial inner membrane that plays crucial roles in the maintenance of crista junctions, inner membrane architecture, and formation of contact sites to the outer membrane. Plays a role in keeping cristae membranes connected to the inner boundary membrane. Also promotes protein import via the mitochondrial intermembrane space assembly (MIA) pathway (By similarity).</text>
</comment>
<comment type="subunit">
    <text evidence="1">Component of the mitochondrial contact site and cristae organizing system (MICOS) complex.</text>
</comment>
<comment type="subcellular location">
    <subcellularLocation>
        <location evidence="1">Mitochondrion inner membrane</location>
        <topology evidence="1">Single-pass membrane protein</topology>
    </subcellularLocation>
</comment>
<comment type="similarity">
    <text evidence="4">Belongs to the MICOS complex subunit Mic60 family.</text>
</comment>
<feature type="transit peptide" description="Mitochondrion" evidence="2">
    <location>
        <begin position="1"/>
        <end position="47"/>
    </location>
</feature>
<feature type="chain" id="PRO_0000406647" description="MICOS complex subunit mic60">
    <location>
        <begin position="48"/>
        <end position="631"/>
    </location>
</feature>
<feature type="topological domain" description="Mitochondrial matrix" evidence="2">
    <location>
        <begin position="48"/>
        <end position="103"/>
    </location>
</feature>
<feature type="transmembrane region" description="Helical" evidence="2">
    <location>
        <begin position="104"/>
        <end position="124"/>
    </location>
</feature>
<feature type="topological domain" description="Mitochondrial intermembrane" evidence="2">
    <location>
        <begin position="125"/>
        <end position="631"/>
    </location>
</feature>
<feature type="region of interest" description="Disordered" evidence="3">
    <location>
        <begin position="50"/>
        <end position="97"/>
    </location>
</feature>
<feature type="region of interest" description="Disordered" evidence="3">
    <location>
        <begin position="160"/>
        <end position="254"/>
    </location>
</feature>
<feature type="coiled-coil region" evidence="2">
    <location>
        <begin position="302"/>
        <end position="447"/>
    </location>
</feature>
<feature type="compositionally biased region" description="Low complexity" evidence="3">
    <location>
        <begin position="52"/>
        <end position="71"/>
    </location>
</feature>
<feature type="compositionally biased region" description="Polar residues" evidence="3">
    <location>
        <begin position="209"/>
        <end position="218"/>
    </location>
</feature>
<feature type="compositionally biased region" description="Basic and acidic residues" evidence="3">
    <location>
        <begin position="225"/>
        <end position="252"/>
    </location>
</feature>
<keyword id="KW-0175">Coiled coil</keyword>
<keyword id="KW-0472">Membrane</keyword>
<keyword id="KW-0496">Mitochondrion</keyword>
<keyword id="KW-0999">Mitochondrion inner membrane</keyword>
<keyword id="KW-1185">Reference proteome</keyword>
<keyword id="KW-0809">Transit peptide</keyword>
<keyword id="KW-0812">Transmembrane</keyword>
<keyword id="KW-1133">Transmembrane helix</keyword>
<proteinExistence type="inferred from homology"/>
<sequence>MVVRPMMLRSSVAPGRQLLLSSARQRTASQWLSRAGASSRLSGQRFFADIKPPTTAAPTPATPSSESAVPPETVPKPSPAGQESTLPPSTPPTPAPKGGRFRRFLLYLLLTSGFAYGGGVFLALKFDNFHDFFTEYIPYGEESVLYFEERDFYRRFPNTLRNQNRLNPTPRDEGNKITIPSKSGLTSKVAEEEISGADVSQKGPHMSATPAQKSSEAQTKPAAAKPEDKTTAVVKAKEDKAAKEAEKKEEPRQPAIPAVTPLEFAQVNEGDEAIVQELVKTFNDMITVISADENSGKYSQPVAKAKEELQKVGEKIIAVREEARRAAQEEIQQAHATFDESARELIRRFDEMRAADAAQYREEFEAEREKLAHAYQEKIRTELQRAQEVAEQRLKNELVEQAIELNRKYLHEVKELVEREREGRLSKLNELTANVSELEKLTSGWREVIDSNLRTQQLQVAVDAVRSVVDRSAVPRPFVRELVAVKELAAEDPVVEAAISSINPAAYQRGIPSTSQIIERFRRVADEVRKASLLPEDAGIASHAASVVLSKVMFKKDAVAGSDDVESVLYRTESLLEEGNLDAAAREMNSLSGWAKILSKDWLVDVRRVLEVKQALEVIETEARLQCLRVE</sequence>
<evidence type="ECO:0000250" key="1"/>
<evidence type="ECO:0000255" key="2"/>
<evidence type="ECO:0000256" key="3">
    <source>
        <dbReference type="SAM" id="MobiDB-lite"/>
    </source>
</evidence>
<evidence type="ECO:0000305" key="4"/>
<dbReference type="EMBL" id="AM270071">
    <property type="protein sequence ID" value="CAL00733.1"/>
    <property type="molecule type" value="Genomic_DNA"/>
</dbReference>
<dbReference type="RefSeq" id="XP_001401614.1">
    <property type="nucleotide sequence ID" value="XM_001401577.2"/>
</dbReference>
<dbReference type="SMR" id="A2QI68"/>
<dbReference type="EnsemblFungi" id="CAL00733">
    <property type="protein sequence ID" value="CAL00733"/>
    <property type="gene ID" value="An04g02460"/>
</dbReference>
<dbReference type="GeneID" id="4990651"/>
<dbReference type="KEGG" id="ang:An04g02460"/>
<dbReference type="VEuPathDB" id="FungiDB:An04g02460"/>
<dbReference type="HOGENOM" id="CLU_008024_1_2_1"/>
<dbReference type="Proteomes" id="UP000006706">
    <property type="component" value="Chromosome 6L"/>
</dbReference>
<dbReference type="GO" id="GO:0061617">
    <property type="term" value="C:MICOS complex"/>
    <property type="evidence" value="ECO:0007669"/>
    <property type="project" value="TreeGrafter"/>
</dbReference>
<dbReference type="GO" id="GO:0042407">
    <property type="term" value="P:cristae formation"/>
    <property type="evidence" value="ECO:0007669"/>
    <property type="project" value="TreeGrafter"/>
</dbReference>
<dbReference type="InterPro" id="IPR019133">
    <property type="entry name" value="MIC60"/>
</dbReference>
<dbReference type="PANTHER" id="PTHR15415:SF7">
    <property type="entry name" value="MICOS COMPLEX SUBUNIT MIC60"/>
    <property type="match status" value="1"/>
</dbReference>
<dbReference type="PANTHER" id="PTHR15415">
    <property type="entry name" value="MITOFILIN"/>
    <property type="match status" value="1"/>
</dbReference>
<dbReference type="Pfam" id="PF09731">
    <property type="entry name" value="Mitofilin"/>
    <property type="match status" value="2"/>
</dbReference>
<reference key="1">
    <citation type="journal article" date="2007" name="Nat. Biotechnol.">
        <title>Genome sequencing and analysis of the versatile cell factory Aspergillus niger CBS 513.88.</title>
        <authorList>
            <person name="Pel H.J."/>
            <person name="de Winde J.H."/>
            <person name="Archer D.B."/>
            <person name="Dyer P.S."/>
            <person name="Hofmann G."/>
            <person name="Schaap P.J."/>
            <person name="Turner G."/>
            <person name="de Vries R.P."/>
            <person name="Albang R."/>
            <person name="Albermann K."/>
            <person name="Andersen M.R."/>
            <person name="Bendtsen J.D."/>
            <person name="Benen J.A.E."/>
            <person name="van den Berg M."/>
            <person name="Breestraat S."/>
            <person name="Caddick M.X."/>
            <person name="Contreras R."/>
            <person name="Cornell M."/>
            <person name="Coutinho P.M."/>
            <person name="Danchin E.G.J."/>
            <person name="Debets A.J.M."/>
            <person name="Dekker P."/>
            <person name="van Dijck P.W.M."/>
            <person name="van Dijk A."/>
            <person name="Dijkhuizen L."/>
            <person name="Driessen A.J.M."/>
            <person name="d'Enfert C."/>
            <person name="Geysens S."/>
            <person name="Goosen C."/>
            <person name="Groot G.S.P."/>
            <person name="de Groot P.W.J."/>
            <person name="Guillemette T."/>
            <person name="Henrissat B."/>
            <person name="Herweijer M."/>
            <person name="van den Hombergh J.P.T.W."/>
            <person name="van den Hondel C.A.M.J.J."/>
            <person name="van der Heijden R.T.J.M."/>
            <person name="van der Kaaij R.M."/>
            <person name="Klis F.M."/>
            <person name="Kools H.J."/>
            <person name="Kubicek C.P."/>
            <person name="van Kuyk P.A."/>
            <person name="Lauber J."/>
            <person name="Lu X."/>
            <person name="van der Maarel M.J.E.C."/>
            <person name="Meulenberg R."/>
            <person name="Menke H."/>
            <person name="Mortimer M.A."/>
            <person name="Nielsen J."/>
            <person name="Oliver S.G."/>
            <person name="Olsthoorn M."/>
            <person name="Pal K."/>
            <person name="van Peij N.N.M.E."/>
            <person name="Ram A.F.J."/>
            <person name="Rinas U."/>
            <person name="Roubos J.A."/>
            <person name="Sagt C.M.J."/>
            <person name="Schmoll M."/>
            <person name="Sun J."/>
            <person name="Ussery D."/>
            <person name="Varga J."/>
            <person name="Vervecken W."/>
            <person name="van de Vondervoort P.J.J."/>
            <person name="Wedler H."/>
            <person name="Woesten H.A.B."/>
            <person name="Zeng A.-P."/>
            <person name="van Ooyen A.J.J."/>
            <person name="Visser J."/>
            <person name="Stam H."/>
        </authorList>
    </citation>
    <scope>NUCLEOTIDE SEQUENCE [LARGE SCALE GENOMIC DNA]</scope>
    <source>
        <strain>ATCC MYA-4892 / CBS 513.88 / FGSC A1513</strain>
    </source>
</reference>
<accession>A2QI68</accession>
<protein>
    <recommendedName>
        <fullName>MICOS complex subunit mic60</fullName>
    </recommendedName>
    <alternativeName>
        <fullName>Mitofilin</fullName>
    </alternativeName>
</protein>
<name>MIC60_ASPNC</name>